<reference key="1">
    <citation type="journal article" date="1996" name="J. Neurosci.">
        <title>Molecular and developmental characterization of novel cDNAs of the myelin-associated/oligodendrocytic basic protein.</title>
        <authorList>
            <person name="Holz A."/>
            <person name="Schaeren-Wiemers N."/>
            <person name="Schaefer C."/>
            <person name="Pott U."/>
            <person name="Colello R.J."/>
            <person name="Schwab M.E."/>
        </authorList>
    </citation>
    <scope>NUCLEOTIDE SEQUENCE [MRNA] (ISOFORM 2)</scope>
    <source>
        <strain>C57BL/6J</strain>
    </source>
</reference>
<reference key="2">
    <citation type="journal article" date="1999" name="Mol. Cell. Neurosci.">
        <title>Splicing pattern, transcript start distribution, and DNA sequence of the mouse gene (Mobp) encoding myelin-associated oligodendrocytic basic protein.</title>
        <authorList>
            <person name="McCallion A.S."/>
            <person name="Stewart G.J."/>
            <person name="Montague P."/>
            <person name="Griffiths I.R."/>
            <person name="Davies R.W."/>
        </authorList>
    </citation>
    <scope>NUCLEOTIDE SEQUENCE [GENOMIC DNA]</scope>
    <scope>ALTERNATIVE SPLICING (ISOFORMS 1; 2; 3; 4 AND 5)</scope>
    <source>
        <strain>129/Sv</strain>
    </source>
</reference>
<reference key="3">
    <citation type="submission" date="2006-01" db="EMBL/GenBank/DDBJ databases">
        <title>Genomic sequence analysis of laminin receptor loci in mice.</title>
        <authorList>
            <person name="Lee I.Y."/>
            <person name="Baxter D.H."/>
            <person name="Qin S."/>
            <person name="Hood L.E."/>
        </authorList>
    </citation>
    <scope>NUCLEOTIDE SEQUENCE [GENOMIC DNA]</scope>
    <scope>ALTERNATIVE SPLICING (ISOFORM 2)</scope>
    <source>
        <strain>CAST/EiJ</strain>
        <strain>SJL/J</strain>
    </source>
</reference>
<reference key="4">
    <citation type="journal article" date="2005" name="Science">
        <title>The transcriptional landscape of the mammalian genome.</title>
        <authorList>
            <person name="Carninci P."/>
            <person name="Kasukawa T."/>
            <person name="Katayama S."/>
            <person name="Gough J."/>
            <person name="Frith M.C."/>
            <person name="Maeda N."/>
            <person name="Oyama R."/>
            <person name="Ravasi T."/>
            <person name="Lenhard B."/>
            <person name="Wells C."/>
            <person name="Kodzius R."/>
            <person name="Shimokawa K."/>
            <person name="Bajic V.B."/>
            <person name="Brenner S.E."/>
            <person name="Batalov S."/>
            <person name="Forrest A.R."/>
            <person name="Zavolan M."/>
            <person name="Davis M.J."/>
            <person name="Wilming L.G."/>
            <person name="Aidinis V."/>
            <person name="Allen J.E."/>
            <person name="Ambesi-Impiombato A."/>
            <person name="Apweiler R."/>
            <person name="Aturaliya R.N."/>
            <person name="Bailey T.L."/>
            <person name="Bansal M."/>
            <person name="Baxter L."/>
            <person name="Beisel K.W."/>
            <person name="Bersano T."/>
            <person name="Bono H."/>
            <person name="Chalk A.M."/>
            <person name="Chiu K.P."/>
            <person name="Choudhary V."/>
            <person name="Christoffels A."/>
            <person name="Clutterbuck D.R."/>
            <person name="Crowe M.L."/>
            <person name="Dalla E."/>
            <person name="Dalrymple B.P."/>
            <person name="de Bono B."/>
            <person name="Della Gatta G."/>
            <person name="di Bernardo D."/>
            <person name="Down T."/>
            <person name="Engstrom P."/>
            <person name="Fagiolini M."/>
            <person name="Faulkner G."/>
            <person name="Fletcher C.F."/>
            <person name="Fukushima T."/>
            <person name="Furuno M."/>
            <person name="Futaki S."/>
            <person name="Gariboldi M."/>
            <person name="Georgii-Hemming P."/>
            <person name="Gingeras T.R."/>
            <person name="Gojobori T."/>
            <person name="Green R.E."/>
            <person name="Gustincich S."/>
            <person name="Harbers M."/>
            <person name="Hayashi Y."/>
            <person name="Hensch T.K."/>
            <person name="Hirokawa N."/>
            <person name="Hill D."/>
            <person name="Huminiecki L."/>
            <person name="Iacono M."/>
            <person name="Ikeo K."/>
            <person name="Iwama A."/>
            <person name="Ishikawa T."/>
            <person name="Jakt M."/>
            <person name="Kanapin A."/>
            <person name="Katoh M."/>
            <person name="Kawasawa Y."/>
            <person name="Kelso J."/>
            <person name="Kitamura H."/>
            <person name="Kitano H."/>
            <person name="Kollias G."/>
            <person name="Krishnan S.P."/>
            <person name="Kruger A."/>
            <person name="Kummerfeld S.K."/>
            <person name="Kurochkin I.V."/>
            <person name="Lareau L.F."/>
            <person name="Lazarevic D."/>
            <person name="Lipovich L."/>
            <person name="Liu J."/>
            <person name="Liuni S."/>
            <person name="McWilliam S."/>
            <person name="Madan Babu M."/>
            <person name="Madera M."/>
            <person name="Marchionni L."/>
            <person name="Matsuda H."/>
            <person name="Matsuzawa S."/>
            <person name="Miki H."/>
            <person name="Mignone F."/>
            <person name="Miyake S."/>
            <person name="Morris K."/>
            <person name="Mottagui-Tabar S."/>
            <person name="Mulder N."/>
            <person name="Nakano N."/>
            <person name="Nakauchi H."/>
            <person name="Ng P."/>
            <person name="Nilsson R."/>
            <person name="Nishiguchi S."/>
            <person name="Nishikawa S."/>
            <person name="Nori F."/>
            <person name="Ohara O."/>
            <person name="Okazaki Y."/>
            <person name="Orlando V."/>
            <person name="Pang K.C."/>
            <person name="Pavan W.J."/>
            <person name="Pavesi G."/>
            <person name="Pesole G."/>
            <person name="Petrovsky N."/>
            <person name="Piazza S."/>
            <person name="Reed J."/>
            <person name="Reid J.F."/>
            <person name="Ring B.Z."/>
            <person name="Ringwald M."/>
            <person name="Rost B."/>
            <person name="Ruan Y."/>
            <person name="Salzberg S.L."/>
            <person name="Sandelin A."/>
            <person name="Schneider C."/>
            <person name="Schoenbach C."/>
            <person name="Sekiguchi K."/>
            <person name="Semple C.A."/>
            <person name="Seno S."/>
            <person name="Sessa L."/>
            <person name="Sheng Y."/>
            <person name="Shibata Y."/>
            <person name="Shimada H."/>
            <person name="Shimada K."/>
            <person name="Silva D."/>
            <person name="Sinclair B."/>
            <person name="Sperling S."/>
            <person name="Stupka E."/>
            <person name="Sugiura K."/>
            <person name="Sultana R."/>
            <person name="Takenaka Y."/>
            <person name="Taki K."/>
            <person name="Tammoja K."/>
            <person name="Tan S.L."/>
            <person name="Tang S."/>
            <person name="Taylor M.S."/>
            <person name="Tegner J."/>
            <person name="Teichmann S.A."/>
            <person name="Ueda H.R."/>
            <person name="van Nimwegen E."/>
            <person name="Verardo R."/>
            <person name="Wei C.L."/>
            <person name="Yagi K."/>
            <person name="Yamanishi H."/>
            <person name="Zabarovsky E."/>
            <person name="Zhu S."/>
            <person name="Zimmer A."/>
            <person name="Hide W."/>
            <person name="Bult C."/>
            <person name="Grimmond S.M."/>
            <person name="Teasdale R.D."/>
            <person name="Liu E.T."/>
            <person name="Brusic V."/>
            <person name="Quackenbush J."/>
            <person name="Wahlestedt C."/>
            <person name="Mattick J.S."/>
            <person name="Hume D.A."/>
            <person name="Kai C."/>
            <person name="Sasaki D."/>
            <person name="Tomaru Y."/>
            <person name="Fukuda S."/>
            <person name="Kanamori-Katayama M."/>
            <person name="Suzuki M."/>
            <person name="Aoki J."/>
            <person name="Arakawa T."/>
            <person name="Iida J."/>
            <person name="Imamura K."/>
            <person name="Itoh M."/>
            <person name="Kato T."/>
            <person name="Kawaji H."/>
            <person name="Kawagashira N."/>
            <person name="Kawashima T."/>
            <person name="Kojima M."/>
            <person name="Kondo S."/>
            <person name="Konno H."/>
            <person name="Nakano K."/>
            <person name="Ninomiya N."/>
            <person name="Nishio T."/>
            <person name="Okada M."/>
            <person name="Plessy C."/>
            <person name="Shibata K."/>
            <person name="Shiraki T."/>
            <person name="Suzuki S."/>
            <person name="Tagami M."/>
            <person name="Waki K."/>
            <person name="Watahiki A."/>
            <person name="Okamura-Oho Y."/>
            <person name="Suzuki H."/>
            <person name="Kawai J."/>
            <person name="Hayashizaki Y."/>
        </authorList>
    </citation>
    <scope>NUCLEOTIDE SEQUENCE [LARGE SCALE MRNA] (ISOFORMS 1 AND 2)</scope>
    <source>
        <strain>C57BL/6J</strain>
        <tissue>Cerebellum</tissue>
        <tissue>Corpora quadrigemina</tissue>
        <tissue>Hippocampus</tissue>
    </source>
</reference>
<reference key="5">
    <citation type="journal article" date="2004" name="Genome Res.">
        <title>The status, quality, and expansion of the NIH full-length cDNA project: the Mammalian Gene Collection (MGC).</title>
        <authorList>
            <consortium name="The MGC Project Team"/>
        </authorList>
    </citation>
    <scope>NUCLEOTIDE SEQUENCE [LARGE SCALE MRNA] (ISOFORM 1)</scope>
    <source>
        <tissue>Brain</tissue>
    </source>
</reference>
<reference key="6">
    <citation type="journal article" date="2006" name="Mol. Cell. Proteomics">
        <title>Comprehensive identification of phosphorylation sites in postsynaptic density preparations.</title>
        <authorList>
            <person name="Trinidad J.C."/>
            <person name="Specht C.G."/>
            <person name="Thalhammer A."/>
            <person name="Schoepfer R."/>
            <person name="Burlingame A.L."/>
        </authorList>
    </citation>
    <scope>PHOSPHORYLATION [LARGE SCALE ANALYSIS] AT SER-85</scope>
    <scope>IDENTIFICATION BY MASS SPECTROMETRY [LARGE SCALE ANALYSIS]</scope>
    <source>
        <tissue>Brain</tissue>
    </source>
</reference>
<reference key="7">
    <citation type="journal article" date="2010" name="Cell">
        <title>A tissue-specific atlas of mouse protein phosphorylation and expression.</title>
        <authorList>
            <person name="Huttlin E.L."/>
            <person name="Jedrychowski M.P."/>
            <person name="Elias J.E."/>
            <person name="Goswami T."/>
            <person name="Rad R."/>
            <person name="Beausoleil S.A."/>
            <person name="Villen J."/>
            <person name="Haas W."/>
            <person name="Sowa M.E."/>
            <person name="Gygi S.P."/>
        </authorList>
    </citation>
    <scope>PHOSPHORYLATION [LARGE SCALE ANALYSIS] AT SER-85</scope>
    <scope>IDENTIFICATION BY MASS SPECTROMETRY [LARGE SCALE ANALYSIS]</scope>
    <source>
        <tissue>Brain</tissue>
    </source>
</reference>
<feature type="chain" id="PRO_0000281026" description="Myelin-associated oligodendrocyte basic protein">
    <location>
        <begin position="1"/>
        <end position="170"/>
    </location>
</feature>
<feature type="repeat" description="1">
    <location>
        <begin position="93"/>
        <end position="101"/>
    </location>
</feature>
<feature type="repeat" description="2">
    <location>
        <begin position="105"/>
        <end position="110"/>
    </location>
</feature>
<feature type="repeat" description="3; half-length">
    <location>
        <begin position="111"/>
        <end position="115"/>
    </location>
</feature>
<feature type="region of interest" description="Disordered" evidence="3">
    <location>
        <begin position="69"/>
        <end position="170"/>
    </location>
</feature>
<feature type="region of interest" description="3 X 9 AA approximate tandem repeats">
    <location>
        <begin position="93"/>
        <end position="115"/>
    </location>
</feature>
<feature type="compositionally biased region" description="Low complexity" evidence="3">
    <location>
        <begin position="82"/>
        <end position="92"/>
    </location>
</feature>
<feature type="compositionally biased region" description="Basic and acidic residues" evidence="3">
    <location>
        <begin position="118"/>
        <end position="130"/>
    </location>
</feature>
<feature type="compositionally biased region" description="Low complexity" evidence="3">
    <location>
        <begin position="138"/>
        <end position="151"/>
    </location>
</feature>
<feature type="modified residue" description="Phosphoserine" evidence="7 8">
    <location>
        <position position="85"/>
    </location>
</feature>
<feature type="modified residue" description="Phosphoserine" evidence="2">
    <location>
        <position position="98"/>
    </location>
</feature>
<feature type="modified residue" description="Phosphoserine" evidence="2">
    <location>
        <position position="107"/>
    </location>
</feature>
<feature type="splice variant" id="VSP_023936" description="In isoform 2." evidence="4 5">
    <original>SRRATSPQRPKHQ</original>
    <variation>RLRRRSRSTPRKK</variation>
    <location>
        <begin position="69"/>
        <end position="81"/>
    </location>
</feature>
<feature type="splice variant" id="VSP_023937" description="In isoform 3." evidence="6">
    <original>SRRAT</original>
    <variation>RTVRK</variation>
    <location>
        <begin position="69"/>
        <end position="73"/>
    </location>
</feature>
<feature type="splice variant" id="VSP_023938" description="In isoform 4." evidence="6">
    <original>S</original>
    <variation>R</variation>
    <location>
        <position position="69"/>
    </location>
</feature>
<feature type="splice variant" id="VSP_023939" description="In isoform 4." evidence="6">
    <location>
        <begin position="70"/>
        <end position="170"/>
    </location>
</feature>
<feature type="splice variant" id="VSP_023940" description="In isoform 5." evidence="6">
    <original>RRAT</original>
    <variation>MTFW</variation>
    <location>
        <begin position="70"/>
        <end position="73"/>
    </location>
</feature>
<feature type="splice variant" id="VSP_023941" description="In isoform 3 and isoform 5." evidence="6">
    <location>
        <begin position="74"/>
        <end position="170"/>
    </location>
</feature>
<feature type="splice variant" id="VSP_023942" description="In isoform 2." evidence="4 5">
    <location>
        <begin position="82"/>
        <end position="170"/>
    </location>
</feature>
<feature type="sequence conflict" description="In Ref. 2; AAF60192/AAF60193/AAF60194/AAF60195/AAF60196." evidence="6" ref="2">
    <original>M</original>
    <variation>V</variation>
    <location>
        <position position="5"/>
    </location>
</feature>
<dbReference type="EMBL" id="U81317">
    <property type="protein sequence ID" value="AAB65617.1"/>
    <property type="molecule type" value="mRNA"/>
</dbReference>
<dbReference type="EMBL" id="AF120475">
    <property type="protein sequence ID" value="AAF60192.1"/>
    <property type="molecule type" value="Genomic_DNA"/>
</dbReference>
<dbReference type="EMBL" id="AF120476">
    <property type="protein sequence ID" value="AAF60193.1"/>
    <property type="molecule type" value="Genomic_DNA"/>
</dbReference>
<dbReference type="EMBL" id="AF120475">
    <property type="protein sequence ID" value="AAF60193.1"/>
    <property type="status" value="JOINED"/>
    <property type="molecule type" value="Genomic_DNA"/>
</dbReference>
<dbReference type="EMBL" id="AF120475">
    <property type="protein sequence ID" value="AAF60194.1"/>
    <property type="molecule type" value="Genomic_DNA"/>
</dbReference>
<dbReference type="EMBL" id="AF120476">
    <property type="protein sequence ID" value="AAF60195.1"/>
    <property type="molecule type" value="Genomic_DNA"/>
</dbReference>
<dbReference type="EMBL" id="AF120475">
    <property type="protein sequence ID" value="AAF60195.1"/>
    <property type="status" value="JOINED"/>
    <property type="molecule type" value="Genomic_DNA"/>
</dbReference>
<dbReference type="EMBL" id="AF120477">
    <property type="protein sequence ID" value="AAF60196.1"/>
    <property type="molecule type" value="Genomic_DNA"/>
</dbReference>
<dbReference type="EMBL" id="AF120475">
    <property type="protein sequence ID" value="AAF60196.1"/>
    <property type="status" value="JOINED"/>
    <property type="molecule type" value="Genomic_DNA"/>
</dbReference>
<dbReference type="EMBL" id="DQ360291">
    <property type="protein sequence ID" value="ABC95974.1"/>
    <property type="molecule type" value="Genomic_DNA"/>
</dbReference>
<dbReference type="EMBL" id="DQ360292">
    <property type="protein sequence ID" value="ABC95978.1"/>
    <property type="molecule type" value="Genomic_DNA"/>
</dbReference>
<dbReference type="EMBL" id="AK013799">
    <property type="protein sequence ID" value="BAB28998.1"/>
    <property type="molecule type" value="mRNA"/>
</dbReference>
<dbReference type="EMBL" id="AK019323">
    <property type="protein sequence ID" value="BAB31666.1"/>
    <property type="molecule type" value="mRNA"/>
</dbReference>
<dbReference type="EMBL" id="AK028057">
    <property type="protein sequence ID" value="BAC25727.1"/>
    <property type="molecule type" value="mRNA"/>
</dbReference>
<dbReference type="EMBL" id="AK083103">
    <property type="protein sequence ID" value="BAC38761.1"/>
    <property type="molecule type" value="mRNA"/>
</dbReference>
<dbReference type="EMBL" id="AK140055">
    <property type="protein sequence ID" value="BAE24224.1"/>
    <property type="molecule type" value="mRNA"/>
</dbReference>
<dbReference type="EMBL" id="BC048492">
    <property type="protein sequence ID" value="AAH48492.1"/>
    <property type="molecule type" value="mRNA"/>
</dbReference>
<dbReference type="CCDS" id="CCDS23626.1">
    <molecule id="Q9D2P8-1"/>
</dbReference>
<dbReference type="CCDS" id="CCDS40808.1">
    <molecule id="Q9D2P8-2"/>
</dbReference>
<dbReference type="RefSeq" id="NP_001034453.1">
    <property type="nucleotide sequence ID" value="NM_001039364.2"/>
</dbReference>
<dbReference type="RefSeq" id="NP_001034454.1">
    <molecule id="Q9D2P8-1"/>
    <property type="nucleotide sequence ID" value="NM_001039365.3"/>
</dbReference>
<dbReference type="RefSeq" id="NP_032640.1">
    <molecule id="Q9D2P8-2"/>
    <property type="nucleotide sequence ID" value="NM_008614.3"/>
</dbReference>
<dbReference type="SMR" id="Q9D2P8"/>
<dbReference type="FunCoup" id="Q9D2P8">
    <property type="interactions" value="25"/>
</dbReference>
<dbReference type="STRING" id="10090.ENSMUSP00000071084"/>
<dbReference type="iPTMnet" id="Q9D2P8"/>
<dbReference type="PhosphoSitePlus" id="Q9D2P8"/>
<dbReference type="SwissPalm" id="Q9D2P8"/>
<dbReference type="PaxDb" id="10090-ENSMUSP00000071084"/>
<dbReference type="PeptideAtlas" id="Q9D2P8"/>
<dbReference type="ProteomicsDB" id="290270">
    <molecule id="Q9D2P8-1"/>
</dbReference>
<dbReference type="ProteomicsDB" id="290271">
    <molecule id="Q9D2P8-2"/>
</dbReference>
<dbReference type="ProteomicsDB" id="290272">
    <molecule id="Q9D2P8-3"/>
</dbReference>
<dbReference type="ProteomicsDB" id="290273">
    <molecule id="Q9D2P8-4"/>
</dbReference>
<dbReference type="ProteomicsDB" id="290274">
    <molecule id="Q9D2P8-5"/>
</dbReference>
<dbReference type="Antibodypedia" id="28962">
    <property type="antibodies" value="194 antibodies from 29 providers"/>
</dbReference>
<dbReference type="DNASU" id="17433"/>
<dbReference type="Ensembl" id="ENSMUST00000068698.15">
    <molecule id="Q9D2P8-1"/>
    <property type="protein sequence ID" value="ENSMUSP00000071084.8"/>
    <property type="gene ID" value="ENSMUSG00000032517.17"/>
</dbReference>
<dbReference type="Ensembl" id="ENSMUST00000093773.8">
    <molecule id="Q9D2P8-2"/>
    <property type="protein sequence ID" value="ENSMUSP00000091287.2"/>
    <property type="gene ID" value="ENSMUSG00000032517.17"/>
</dbReference>
<dbReference type="Ensembl" id="ENSMUST00000111627.3">
    <molecule id="Q9D2P8-2"/>
    <property type="protein sequence ID" value="ENSMUSP00000107254.2"/>
    <property type="gene ID" value="ENSMUSG00000032517.17"/>
</dbReference>
<dbReference type="Ensembl" id="ENSMUST00000174193.8">
    <molecule id="Q9D2P8-2"/>
    <property type="protein sequence ID" value="ENSMUSP00000134410.2"/>
    <property type="gene ID" value="ENSMUSG00000032517.17"/>
</dbReference>
<dbReference type="Ensembl" id="ENSMUST00000214943.2">
    <molecule id="Q9D2P8-2"/>
    <property type="protein sequence ID" value="ENSMUSP00000149285.2"/>
    <property type="gene ID" value="ENSMUSG00000032517.17"/>
</dbReference>
<dbReference type="Ensembl" id="ENSMUST00000215512.2">
    <molecule id="Q9D2P8-4"/>
    <property type="protein sequence ID" value="ENSMUSP00000149831.2"/>
    <property type="gene ID" value="ENSMUSG00000032517.17"/>
</dbReference>
<dbReference type="GeneID" id="17433"/>
<dbReference type="KEGG" id="mmu:17433"/>
<dbReference type="UCSC" id="uc009scj.1">
    <molecule id="Q9D2P8-1"/>
    <property type="organism name" value="mouse"/>
</dbReference>
<dbReference type="UCSC" id="uc009sck.1">
    <molecule id="Q9D2P8-2"/>
    <property type="organism name" value="mouse"/>
</dbReference>
<dbReference type="AGR" id="MGI:108511"/>
<dbReference type="CTD" id="4336"/>
<dbReference type="MGI" id="MGI:108511">
    <property type="gene designation" value="Mobp"/>
</dbReference>
<dbReference type="VEuPathDB" id="HostDB:ENSMUSG00000032517"/>
<dbReference type="eggNOG" id="ENOG502TDAR">
    <property type="taxonomic scope" value="Eukaryota"/>
</dbReference>
<dbReference type="GeneTree" id="ENSGT00950000183138"/>
<dbReference type="HOGENOM" id="CLU_1481517_0_0_1"/>
<dbReference type="InParanoid" id="Q9D2P8"/>
<dbReference type="OMA" id="FIIRCCP"/>
<dbReference type="OrthoDB" id="10072397at2759"/>
<dbReference type="PhylomeDB" id="Q9D2P8"/>
<dbReference type="BioGRID-ORCS" id="17433">
    <property type="hits" value="5 hits in 78 CRISPR screens"/>
</dbReference>
<dbReference type="ChiTaRS" id="Mobp">
    <property type="organism name" value="mouse"/>
</dbReference>
<dbReference type="PRO" id="PR:Q9D2P8"/>
<dbReference type="Proteomes" id="UP000000589">
    <property type="component" value="Chromosome 9"/>
</dbReference>
<dbReference type="RNAct" id="Q9D2P8">
    <property type="molecule type" value="protein"/>
</dbReference>
<dbReference type="Bgee" id="ENSMUSG00000032517">
    <property type="expression patterns" value="Expressed in cerebellar nuclear complex and 108 other cell types or tissues"/>
</dbReference>
<dbReference type="GO" id="GO:0005829">
    <property type="term" value="C:cytosol"/>
    <property type="evidence" value="ECO:0000304"/>
    <property type="project" value="Reactome"/>
</dbReference>
<dbReference type="GO" id="GO:0005739">
    <property type="term" value="C:mitochondrion"/>
    <property type="evidence" value="ECO:0000314"/>
    <property type="project" value="MGI"/>
</dbReference>
<dbReference type="GO" id="GO:0043209">
    <property type="term" value="C:myelin sheath"/>
    <property type="evidence" value="ECO:0007005"/>
    <property type="project" value="UniProtKB"/>
</dbReference>
<dbReference type="GO" id="GO:0048471">
    <property type="term" value="C:perinuclear region of cytoplasm"/>
    <property type="evidence" value="ECO:0007669"/>
    <property type="project" value="UniProtKB-SubCell"/>
</dbReference>
<dbReference type="GO" id="GO:0019911">
    <property type="term" value="F:structural constituent of myelin sheath"/>
    <property type="evidence" value="ECO:0000314"/>
    <property type="project" value="MGI"/>
</dbReference>
<dbReference type="InterPro" id="IPR041282">
    <property type="entry name" value="FYVE_2"/>
</dbReference>
<dbReference type="InterPro" id="IPR051745">
    <property type="entry name" value="Intracell_Transport_Effector"/>
</dbReference>
<dbReference type="PANTHER" id="PTHR14555">
    <property type="entry name" value="MYELIN-ASSOCIATED OLIGODENDROCYTIC BASIC PROTEIN MOBP -RELATED"/>
    <property type="match status" value="1"/>
</dbReference>
<dbReference type="PANTHER" id="PTHR14555:SF6">
    <property type="entry name" value="RAB EFFECTOR MYRIP"/>
    <property type="match status" value="1"/>
</dbReference>
<dbReference type="Pfam" id="PF02318">
    <property type="entry name" value="FYVE_2"/>
    <property type="match status" value="1"/>
</dbReference>
<comment type="function">
    <text evidence="1">May play a role in compacting or stabilizing the myelin sheath possibly by binding the negatively charged acidic phospholipids of the cytoplasmic membrane.</text>
</comment>
<comment type="subcellular location">
    <subcellularLocation>
        <location>Cytoplasm</location>
        <location>Perinuclear region</location>
    </subcellularLocation>
    <text evidence="1">Present in the major dense line of CNS myelin.</text>
</comment>
<comment type="alternative products">
    <event type="alternative splicing"/>
    <isoform>
        <id>Q9D2P8-1</id>
        <name>1</name>
        <name>MOBP170</name>
        <sequence type="displayed"/>
    </isoform>
    <isoform>
        <id>Q9D2P8-2</id>
        <name>2</name>
        <name>MOBP81</name>
        <sequence type="described" ref="VSP_023936 VSP_023942"/>
    </isoform>
    <isoform>
        <id>Q9D2P8-3</id>
        <name>3</name>
        <name>MOBP73</name>
        <sequence type="described" ref="VSP_023937 VSP_023941"/>
    </isoform>
    <isoform>
        <id>Q9D2P8-4</id>
        <name>4</name>
        <name>MOBP69</name>
        <sequence type="described" ref="VSP_023938 VSP_023939"/>
    </isoform>
    <isoform>
        <id>Q9D2P8-5</id>
        <name>5</name>
        <name>MOBP74</name>
        <sequence type="described" ref="VSP_023940 VSP_023941"/>
    </isoform>
</comment>
<gene>
    <name type="primary">Mobp</name>
</gene>
<organism>
    <name type="scientific">Mus musculus</name>
    <name type="common">Mouse</name>
    <dbReference type="NCBI Taxonomy" id="10090"/>
    <lineage>
        <taxon>Eukaryota</taxon>
        <taxon>Metazoa</taxon>
        <taxon>Chordata</taxon>
        <taxon>Craniata</taxon>
        <taxon>Vertebrata</taxon>
        <taxon>Euteleostomi</taxon>
        <taxon>Mammalia</taxon>
        <taxon>Eutheria</taxon>
        <taxon>Euarchontoglires</taxon>
        <taxon>Glires</taxon>
        <taxon>Rodentia</taxon>
        <taxon>Myomorpha</taxon>
        <taxon>Muroidea</taxon>
        <taxon>Muridae</taxon>
        <taxon>Murinae</taxon>
        <taxon>Mus</taxon>
        <taxon>Mus</taxon>
    </lineage>
</organism>
<name>MOBP_MOUSE</name>
<proteinExistence type="evidence at protein level"/>
<keyword id="KW-0025">Alternative splicing</keyword>
<keyword id="KW-0963">Cytoplasm</keyword>
<keyword id="KW-0597">Phosphoprotein</keyword>
<keyword id="KW-1185">Reference proteome</keyword>
<keyword id="KW-0677">Repeat</keyword>
<evidence type="ECO:0000250" key="1"/>
<evidence type="ECO:0000250" key="2">
    <source>
        <dbReference type="UniProtKB" id="Q63327"/>
    </source>
</evidence>
<evidence type="ECO:0000256" key="3">
    <source>
        <dbReference type="SAM" id="MobiDB-lite"/>
    </source>
</evidence>
<evidence type="ECO:0000303" key="4">
    <source>
    </source>
</evidence>
<evidence type="ECO:0000303" key="5">
    <source>
    </source>
</evidence>
<evidence type="ECO:0000305" key="6"/>
<evidence type="ECO:0007744" key="7">
    <source>
    </source>
</evidence>
<evidence type="ECO:0007744" key="8">
    <source>
    </source>
</evidence>
<protein>
    <recommendedName>
        <fullName>Myelin-associated oligodendrocyte basic protein</fullName>
    </recommendedName>
</protein>
<accession>Q9D2P8</accession>
<accession>O35713</accession>
<accession>Q792D7</accession>
<accession>Q792D8</accession>
<accession>Q9JLY4</accession>
<accession>Q9JLY5</accession>
<accession>Q9JLY6</accession>
<sequence>MSQKMAKEGPRLSKNQKFSEHFSIHCCPPFTFLNSKREIVDRKYSICKSGCFYQKKEEDWICCACQKTSRRATSPQRPKHQPAASPVVVRAPPAKPKSPLMPAKPRSPPRPAKPRSPSRTERQPRPRPEVRPPPAKQKPPQKSKQPARSSPLRGPGTSRGGSPTRAPRFW</sequence>